<sequence length="139" mass="15689">MKPAARRRARECAVQALYSWQLSQNDIADVEYQFLAEQDVKDVDVLYFRELLSGVATNSAYLDGLMKPYLSRLLEELGQVEKAVLRIALFELSKRSDVPYKVAINEAIELAKTFGAEDSHKFVNGVLDKAAPVIRPNKK</sequence>
<gene>
    <name evidence="1" type="primary">nusB</name>
    <name type="ordered locus">SeSA_A0478</name>
</gene>
<comment type="function">
    <text evidence="1">Involved in transcription antitermination. Required for transcription of ribosomal RNA (rRNA) genes. Binds specifically to the boxA antiterminator sequence of the ribosomal RNA (rrn) operons.</text>
</comment>
<comment type="similarity">
    <text evidence="1">Belongs to the NusB family.</text>
</comment>
<evidence type="ECO:0000255" key="1">
    <source>
        <dbReference type="HAMAP-Rule" id="MF_00073"/>
    </source>
</evidence>
<feature type="chain" id="PRO_1000092586" description="Transcription antitermination protein NusB">
    <location>
        <begin position="1"/>
        <end position="139"/>
    </location>
</feature>
<protein>
    <recommendedName>
        <fullName evidence="1">Transcription antitermination protein NusB</fullName>
    </recommendedName>
    <alternativeName>
        <fullName evidence="1">Antitermination factor NusB</fullName>
    </alternativeName>
</protein>
<organism>
    <name type="scientific">Salmonella schwarzengrund (strain CVM19633)</name>
    <dbReference type="NCBI Taxonomy" id="439843"/>
    <lineage>
        <taxon>Bacteria</taxon>
        <taxon>Pseudomonadati</taxon>
        <taxon>Pseudomonadota</taxon>
        <taxon>Gammaproteobacteria</taxon>
        <taxon>Enterobacterales</taxon>
        <taxon>Enterobacteriaceae</taxon>
        <taxon>Salmonella</taxon>
    </lineage>
</organism>
<reference key="1">
    <citation type="journal article" date="2011" name="J. Bacteriol.">
        <title>Comparative genomics of 28 Salmonella enterica isolates: evidence for CRISPR-mediated adaptive sublineage evolution.</title>
        <authorList>
            <person name="Fricke W.F."/>
            <person name="Mammel M.K."/>
            <person name="McDermott P.F."/>
            <person name="Tartera C."/>
            <person name="White D.G."/>
            <person name="Leclerc J.E."/>
            <person name="Ravel J."/>
            <person name="Cebula T.A."/>
        </authorList>
    </citation>
    <scope>NUCLEOTIDE SEQUENCE [LARGE SCALE GENOMIC DNA]</scope>
    <source>
        <strain>CVM19633</strain>
    </source>
</reference>
<accession>B4TM98</accession>
<name>NUSB_SALSV</name>
<dbReference type="EMBL" id="CP001127">
    <property type="protein sequence ID" value="ACF90558.1"/>
    <property type="molecule type" value="Genomic_DNA"/>
</dbReference>
<dbReference type="RefSeq" id="WP_000801129.1">
    <property type="nucleotide sequence ID" value="NC_011094.1"/>
</dbReference>
<dbReference type="SMR" id="B4TM98"/>
<dbReference type="GeneID" id="89550189"/>
<dbReference type="KEGG" id="sew:SeSA_A0478"/>
<dbReference type="HOGENOM" id="CLU_087843_4_1_6"/>
<dbReference type="Proteomes" id="UP000001865">
    <property type="component" value="Chromosome"/>
</dbReference>
<dbReference type="GO" id="GO:0005829">
    <property type="term" value="C:cytosol"/>
    <property type="evidence" value="ECO:0007669"/>
    <property type="project" value="TreeGrafter"/>
</dbReference>
<dbReference type="GO" id="GO:0003723">
    <property type="term" value="F:RNA binding"/>
    <property type="evidence" value="ECO:0007669"/>
    <property type="project" value="UniProtKB-UniRule"/>
</dbReference>
<dbReference type="GO" id="GO:0006353">
    <property type="term" value="P:DNA-templated transcription termination"/>
    <property type="evidence" value="ECO:0007669"/>
    <property type="project" value="UniProtKB-UniRule"/>
</dbReference>
<dbReference type="GO" id="GO:0031564">
    <property type="term" value="P:transcription antitermination"/>
    <property type="evidence" value="ECO:0007669"/>
    <property type="project" value="UniProtKB-KW"/>
</dbReference>
<dbReference type="CDD" id="cd00619">
    <property type="entry name" value="Terminator_NusB"/>
    <property type="match status" value="1"/>
</dbReference>
<dbReference type="FunFam" id="1.10.940.10:FF:000001">
    <property type="entry name" value="Transcription antitermination factor NusB"/>
    <property type="match status" value="1"/>
</dbReference>
<dbReference type="Gene3D" id="1.10.940.10">
    <property type="entry name" value="NusB-like"/>
    <property type="match status" value="1"/>
</dbReference>
<dbReference type="HAMAP" id="MF_00073">
    <property type="entry name" value="NusB"/>
    <property type="match status" value="1"/>
</dbReference>
<dbReference type="InterPro" id="IPR035926">
    <property type="entry name" value="NusB-like_sf"/>
</dbReference>
<dbReference type="InterPro" id="IPR011605">
    <property type="entry name" value="NusB_fam"/>
</dbReference>
<dbReference type="InterPro" id="IPR006027">
    <property type="entry name" value="NusB_RsmB_TIM44"/>
</dbReference>
<dbReference type="NCBIfam" id="TIGR01951">
    <property type="entry name" value="nusB"/>
    <property type="match status" value="1"/>
</dbReference>
<dbReference type="PANTHER" id="PTHR11078:SF3">
    <property type="entry name" value="ANTITERMINATION NUSB DOMAIN-CONTAINING PROTEIN"/>
    <property type="match status" value="1"/>
</dbReference>
<dbReference type="PANTHER" id="PTHR11078">
    <property type="entry name" value="N UTILIZATION SUBSTANCE PROTEIN B-RELATED"/>
    <property type="match status" value="1"/>
</dbReference>
<dbReference type="Pfam" id="PF01029">
    <property type="entry name" value="NusB"/>
    <property type="match status" value="1"/>
</dbReference>
<dbReference type="SUPFAM" id="SSF48013">
    <property type="entry name" value="NusB-like"/>
    <property type="match status" value="1"/>
</dbReference>
<proteinExistence type="inferred from homology"/>
<keyword id="KW-0694">RNA-binding</keyword>
<keyword id="KW-0804">Transcription</keyword>
<keyword id="KW-0889">Transcription antitermination</keyword>
<keyword id="KW-0805">Transcription regulation</keyword>